<sequence length="448" mass="49941">MMKLSDITTQENDLKKIVEYILNLAANHSVFSEVVIEKNCGVDVLIRKNSVNSIEFNKNNILTITVYKNNRKGMVSSTDLSFKSIHNVFSSVMGIVFYSSPDEFSGLPDRKLLAINKVKDLDLYHDWDWNINHAIEIAKLSEREAFKEDKRIINSEGSCFNSLVRTRAFGNSLGMIECYSTTLYSTSCCVIAGDNGDMQRDFSFSVSRDMNDLNLPEKVGQDSAKKALSRLNSKKLLTMKTSAIFSSEIAFEFFINFAKAINGNNVYQKSTFLLHSLNTQVFPNWLTIEERPHIKKGLSSKCFDAEGVMTKTKKIVNKGILKTWLLDTYSARKINLVSTGNSGGIHNWLILGNSNEGLQSLLKSMNTGLLITELLGQGVSITTGNYSRGAVGFWVDQGVIKYPVNEITISGNLKNMFKDIVSIGNDIDKRHSIQSGSILLSQIQVSGI</sequence>
<reference key="1">
    <citation type="journal article" date="2003" name="Proc. Natl. Acad. Sci. U.S.A.">
        <title>Reductive genome evolution in Buchnera aphidicola.</title>
        <authorList>
            <person name="van Ham R.C.H.J."/>
            <person name="Kamerbeek J."/>
            <person name="Palacios C."/>
            <person name="Rausell C."/>
            <person name="Abascal F."/>
            <person name="Bastolla U."/>
            <person name="Fernandez J.M."/>
            <person name="Jimenez L."/>
            <person name="Postigo M."/>
            <person name="Silva F.J."/>
            <person name="Tamames J."/>
            <person name="Viguera E."/>
            <person name="Latorre A."/>
            <person name="Valencia A."/>
            <person name="Moran F."/>
            <person name="Moya A."/>
        </authorList>
    </citation>
    <scope>NUCLEOTIDE SEQUENCE [LARGE SCALE GENOMIC DNA]</scope>
    <source>
        <strain>Bp</strain>
    </source>
</reference>
<accession>Q89AY6</accession>
<proteinExistence type="inferred from homology"/>
<feature type="chain" id="PRO_0000142350" description="Metalloprotease PmbA homolog">
    <location>
        <begin position="1"/>
        <end position="448"/>
    </location>
</feature>
<comment type="function">
    <text evidence="1">Probable metalloprotease.</text>
</comment>
<comment type="subcellular location">
    <subcellularLocation>
        <location evidence="2">Cytoplasm</location>
    </subcellularLocation>
</comment>
<comment type="similarity">
    <text evidence="2">Belongs to the peptidase U62 family.</text>
</comment>
<protein>
    <recommendedName>
        <fullName>Metalloprotease PmbA homolog</fullName>
        <ecNumber>3.4.-.-</ecNumber>
    </recommendedName>
</protein>
<name>PMBA_BUCBP</name>
<organism>
    <name type="scientific">Buchnera aphidicola subsp. Baizongia pistaciae (strain Bp)</name>
    <dbReference type="NCBI Taxonomy" id="224915"/>
    <lineage>
        <taxon>Bacteria</taxon>
        <taxon>Pseudomonadati</taxon>
        <taxon>Pseudomonadota</taxon>
        <taxon>Gammaproteobacteria</taxon>
        <taxon>Enterobacterales</taxon>
        <taxon>Erwiniaceae</taxon>
        <taxon>Buchnera</taxon>
    </lineage>
</organism>
<dbReference type="EC" id="3.4.-.-"/>
<dbReference type="EMBL" id="AE016826">
    <property type="protein sequence ID" value="AAO26819.1"/>
    <property type="molecule type" value="Genomic_DNA"/>
</dbReference>
<dbReference type="RefSeq" id="WP_011091220.1">
    <property type="nucleotide sequence ID" value="NC_004545.1"/>
</dbReference>
<dbReference type="SMR" id="Q89AY6"/>
<dbReference type="STRING" id="224915.bbp_083"/>
<dbReference type="KEGG" id="bab:bbp_083"/>
<dbReference type="eggNOG" id="COG0312">
    <property type="taxonomic scope" value="Bacteria"/>
</dbReference>
<dbReference type="HOGENOM" id="CLU_026425_0_0_6"/>
<dbReference type="OrthoDB" id="9803618at2"/>
<dbReference type="Proteomes" id="UP000000601">
    <property type="component" value="Chromosome"/>
</dbReference>
<dbReference type="GO" id="GO:0005829">
    <property type="term" value="C:cytosol"/>
    <property type="evidence" value="ECO:0007669"/>
    <property type="project" value="TreeGrafter"/>
</dbReference>
<dbReference type="GO" id="GO:0008237">
    <property type="term" value="F:metallopeptidase activity"/>
    <property type="evidence" value="ECO:0007669"/>
    <property type="project" value="UniProtKB-KW"/>
</dbReference>
<dbReference type="GO" id="GO:0006508">
    <property type="term" value="P:proteolysis"/>
    <property type="evidence" value="ECO:0007669"/>
    <property type="project" value="UniProtKB-KW"/>
</dbReference>
<dbReference type="Gene3D" id="3.30.2290.10">
    <property type="entry name" value="PmbA/TldD superfamily"/>
    <property type="match status" value="1"/>
</dbReference>
<dbReference type="InterPro" id="IPR045569">
    <property type="entry name" value="Metalloprtase-TldD/E_C"/>
</dbReference>
<dbReference type="InterPro" id="IPR045570">
    <property type="entry name" value="Metalloprtase-TldD/E_cen_dom"/>
</dbReference>
<dbReference type="InterPro" id="IPR002510">
    <property type="entry name" value="Metalloprtase-TldD/E_N"/>
</dbReference>
<dbReference type="InterPro" id="IPR047657">
    <property type="entry name" value="PmbA"/>
</dbReference>
<dbReference type="InterPro" id="IPR035068">
    <property type="entry name" value="TldD/PmbA_N"/>
</dbReference>
<dbReference type="InterPro" id="IPR036059">
    <property type="entry name" value="TldD/PmbA_sf"/>
</dbReference>
<dbReference type="NCBIfam" id="NF008268">
    <property type="entry name" value="PRK11040.1"/>
    <property type="match status" value="1"/>
</dbReference>
<dbReference type="PANTHER" id="PTHR43421">
    <property type="entry name" value="METALLOPROTEASE PMBA"/>
    <property type="match status" value="1"/>
</dbReference>
<dbReference type="PANTHER" id="PTHR43421:SF1">
    <property type="entry name" value="METALLOPROTEASE PMBA"/>
    <property type="match status" value="1"/>
</dbReference>
<dbReference type="Pfam" id="PF01523">
    <property type="entry name" value="PmbA_TldD_1st"/>
    <property type="match status" value="1"/>
</dbReference>
<dbReference type="Pfam" id="PF19290">
    <property type="entry name" value="PmbA_TldD_2nd"/>
    <property type="match status" value="1"/>
</dbReference>
<dbReference type="Pfam" id="PF19289">
    <property type="entry name" value="PmbA_TldD_3rd"/>
    <property type="match status" value="1"/>
</dbReference>
<dbReference type="SUPFAM" id="SSF111283">
    <property type="entry name" value="Putative modulator of DNA gyrase, PmbA/TldD"/>
    <property type="match status" value="1"/>
</dbReference>
<gene>
    <name type="primary">pmbA</name>
    <name type="ordered locus">bbp_083</name>
</gene>
<evidence type="ECO:0000250" key="1"/>
<evidence type="ECO:0000305" key="2"/>
<keyword id="KW-0963">Cytoplasm</keyword>
<keyword id="KW-0378">Hydrolase</keyword>
<keyword id="KW-0482">Metalloprotease</keyword>
<keyword id="KW-0645">Protease</keyword>
<keyword id="KW-1185">Reference proteome</keyword>